<dbReference type="EC" id="2.3.2.27" evidence="1"/>
<dbReference type="EMBL" id="BC046256">
    <property type="protein sequence ID" value="AAH46256.1"/>
    <property type="molecule type" value="mRNA"/>
</dbReference>
<dbReference type="RefSeq" id="NP_001080384.1">
    <property type="nucleotide sequence ID" value="NM_001086915.1"/>
</dbReference>
<dbReference type="SMR" id="Q7ZX20"/>
<dbReference type="DNASU" id="380076"/>
<dbReference type="GeneID" id="380076"/>
<dbReference type="KEGG" id="xla:380076"/>
<dbReference type="AGR" id="Xenbase:XB-GENE-6254223"/>
<dbReference type="CTD" id="380076"/>
<dbReference type="Xenbase" id="XB-GENE-6254223">
    <property type="gene designation" value="rnf8.S"/>
</dbReference>
<dbReference type="OMA" id="KEEHEIC"/>
<dbReference type="OrthoDB" id="5330228at2759"/>
<dbReference type="UniPathway" id="UPA00143"/>
<dbReference type="Proteomes" id="UP000186698">
    <property type="component" value="Chromosome 5S"/>
</dbReference>
<dbReference type="Bgee" id="380076">
    <property type="expression patterns" value="Expressed in testis and 19 other cell types or tissues"/>
</dbReference>
<dbReference type="GO" id="GO:0000781">
    <property type="term" value="C:chromosome, telomeric region"/>
    <property type="evidence" value="ECO:0000250"/>
    <property type="project" value="UniProtKB"/>
</dbReference>
<dbReference type="GO" id="GO:0005829">
    <property type="term" value="C:cytosol"/>
    <property type="evidence" value="ECO:0000318"/>
    <property type="project" value="GO_Central"/>
</dbReference>
<dbReference type="GO" id="GO:0005634">
    <property type="term" value="C:nucleus"/>
    <property type="evidence" value="ECO:0000250"/>
    <property type="project" value="UniProtKB"/>
</dbReference>
<dbReference type="GO" id="GO:0035861">
    <property type="term" value="C:site of double-strand break"/>
    <property type="evidence" value="ECO:0000250"/>
    <property type="project" value="UniProtKB"/>
</dbReference>
<dbReference type="GO" id="GO:0000151">
    <property type="term" value="C:ubiquitin ligase complex"/>
    <property type="evidence" value="ECO:0000250"/>
    <property type="project" value="UniProtKB"/>
</dbReference>
<dbReference type="GO" id="GO:0003682">
    <property type="term" value="F:chromatin binding"/>
    <property type="evidence" value="ECO:0000250"/>
    <property type="project" value="UniProtKB"/>
</dbReference>
<dbReference type="GO" id="GO:0042393">
    <property type="term" value="F:histone binding"/>
    <property type="evidence" value="ECO:0000250"/>
    <property type="project" value="UniProtKB"/>
</dbReference>
<dbReference type="GO" id="GO:0042803">
    <property type="term" value="F:protein homodimerization activity"/>
    <property type="evidence" value="ECO:0000250"/>
    <property type="project" value="UniProtKB"/>
</dbReference>
<dbReference type="GO" id="GO:0043130">
    <property type="term" value="F:ubiquitin binding"/>
    <property type="evidence" value="ECO:0007669"/>
    <property type="project" value="UniProtKB-UniRule"/>
</dbReference>
<dbReference type="GO" id="GO:0061630">
    <property type="term" value="F:ubiquitin protein ligase activity"/>
    <property type="evidence" value="ECO:0000250"/>
    <property type="project" value="UniProtKB"/>
</dbReference>
<dbReference type="GO" id="GO:0008270">
    <property type="term" value="F:zinc ion binding"/>
    <property type="evidence" value="ECO:0000250"/>
    <property type="project" value="UniProtKB"/>
</dbReference>
<dbReference type="GO" id="GO:0006974">
    <property type="term" value="P:DNA damage response"/>
    <property type="evidence" value="ECO:0000250"/>
    <property type="project" value="UniProtKB"/>
</dbReference>
<dbReference type="GO" id="GO:0140861">
    <property type="term" value="P:DNA repair-dependent chromatin remodeling"/>
    <property type="evidence" value="ECO:0000250"/>
    <property type="project" value="UniProtKB"/>
</dbReference>
<dbReference type="GO" id="GO:0006302">
    <property type="term" value="P:double-strand break repair"/>
    <property type="evidence" value="ECO:0000250"/>
    <property type="project" value="UniProtKB"/>
</dbReference>
<dbReference type="GO" id="GO:0006303">
    <property type="term" value="P:double-strand break repair via nonhomologous end joining"/>
    <property type="evidence" value="ECO:0000250"/>
    <property type="project" value="UniProtKB"/>
</dbReference>
<dbReference type="GO" id="GO:0040029">
    <property type="term" value="P:epigenetic regulation of gene expression"/>
    <property type="evidence" value="ECO:0000250"/>
    <property type="project" value="UniProtKB"/>
</dbReference>
<dbReference type="GO" id="GO:0045190">
    <property type="term" value="P:isotype switching"/>
    <property type="evidence" value="ECO:0000250"/>
    <property type="project" value="UniProtKB"/>
</dbReference>
<dbReference type="GO" id="GO:0034244">
    <property type="term" value="P:negative regulation of transcription elongation by RNA polymerase II"/>
    <property type="evidence" value="ECO:0000250"/>
    <property type="project" value="UniProtKB"/>
</dbReference>
<dbReference type="GO" id="GO:0045739">
    <property type="term" value="P:positive regulation of DNA repair"/>
    <property type="evidence" value="ECO:0000250"/>
    <property type="project" value="UniProtKB"/>
</dbReference>
<dbReference type="GO" id="GO:1905168">
    <property type="term" value="P:positive regulation of double-strand break repair via homologous recombination"/>
    <property type="evidence" value="ECO:0000250"/>
    <property type="project" value="UniProtKB"/>
</dbReference>
<dbReference type="GO" id="GO:0070936">
    <property type="term" value="P:protein K48-linked ubiquitination"/>
    <property type="evidence" value="ECO:0000250"/>
    <property type="project" value="UniProtKB"/>
</dbReference>
<dbReference type="GO" id="GO:0085020">
    <property type="term" value="P:protein K6-linked ubiquitination"/>
    <property type="evidence" value="ECO:0000250"/>
    <property type="project" value="UniProtKB"/>
</dbReference>
<dbReference type="GO" id="GO:0070534">
    <property type="term" value="P:protein K63-linked ubiquitination"/>
    <property type="evidence" value="ECO:0000250"/>
    <property type="project" value="UniProtKB"/>
</dbReference>
<dbReference type="GO" id="GO:0010212">
    <property type="term" value="P:response to ionizing radiation"/>
    <property type="evidence" value="ECO:0000250"/>
    <property type="project" value="UniProtKB"/>
</dbReference>
<dbReference type="GO" id="GO:0035092">
    <property type="term" value="P:sperm DNA condensation"/>
    <property type="evidence" value="ECO:0000250"/>
    <property type="project" value="UniProtKB"/>
</dbReference>
<dbReference type="GO" id="GO:0006511">
    <property type="term" value="P:ubiquitin-dependent protein catabolic process"/>
    <property type="evidence" value="ECO:0000250"/>
    <property type="project" value="UniProtKB"/>
</dbReference>
<dbReference type="CDD" id="cd22663">
    <property type="entry name" value="FHA_RNF8"/>
    <property type="match status" value="1"/>
</dbReference>
<dbReference type="CDD" id="cd16535">
    <property type="entry name" value="RING-HC_RNF8"/>
    <property type="match status" value="1"/>
</dbReference>
<dbReference type="FunFam" id="1.20.5.170:FF:000050">
    <property type="entry name" value="E3 ubiquitin-protein ligase RNF8"/>
    <property type="match status" value="1"/>
</dbReference>
<dbReference type="FunFam" id="2.60.200.20:FF:000015">
    <property type="entry name" value="E3 ubiquitin-protein ligase RNF8"/>
    <property type="match status" value="1"/>
</dbReference>
<dbReference type="Gene3D" id="1.20.5.170">
    <property type="match status" value="1"/>
</dbReference>
<dbReference type="Gene3D" id="2.60.200.20">
    <property type="match status" value="1"/>
</dbReference>
<dbReference type="Gene3D" id="3.30.40.10">
    <property type="entry name" value="Zinc/RING finger domain, C3HC4 (zinc finger)"/>
    <property type="match status" value="1"/>
</dbReference>
<dbReference type="HAMAP" id="MF_03067">
    <property type="entry name" value="RNF8"/>
    <property type="match status" value="1"/>
</dbReference>
<dbReference type="InterPro" id="IPR000253">
    <property type="entry name" value="FHA_dom"/>
</dbReference>
<dbReference type="InterPro" id="IPR017335">
    <property type="entry name" value="RNF8"/>
</dbReference>
<dbReference type="InterPro" id="IPR008984">
    <property type="entry name" value="SMAD_FHA_dom_sf"/>
</dbReference>
<dbReference type="InterPro" id="IPR001841">
    <property type="entry name" value="Znf_RING"/>
</dbReference>
<dbReference type="InterPro" id="IPR013083">
    <property type="entry name" value="Znf_RING/FYVE/PHD"/>
</dbReference>
<dbReference type="InterPro" id="IPR017907">
    <property type="entry name" value="Znf_RING_CS"/>
</dbReference>
<dbReference type="PANTHER" id="PTHR15067">
    <property type="entry name" value="E3 UBIQUITIN-PROTEIN LIGASE RNF8"/>
    <property type="match status" value="1"/>
</dbReference>
<dbReference type="PANTHER" id="PTHR15067:SF4">
    <property type="entry name" value="E3 UBIQUITIN-PROTEIN LIGASE RNF8"/>
    <property type="match status" value="1"/>
</dbReference>
<dbReference type="Pfam" id="PF00498">
    <property type="entry name" value="FHA"/>
    <property type="match status" value="1"/>
</dbReference>
<dbReference type="Pfam" id="PF13920">
    <property type="entry name" value="zf-C3HC4_3"/>
    <property type="match status" value="1"/>
</dbReference>
<dbReference type="PIRSF" id="PIRSF037950">
    <property type="entry name" value="E3_ubiquit_lig_RNF8"/>
    <property type="match status" value="1"/>
</dbReference>
<dbReference type="SMART" id="SM00240">
    <property type="entry name" value="FHA"/>
    <property type="match status" value="1"/>
</dbReference>
<dbReference type="SMART" id="SM00184">
    <property type="entry name" value="RING"/>
    <property type="match status" value="1"/>
</dbReference>
<dbReference type="SUPFAM" id="SSF57850">
    <property type="entry name" value="RING/U-box"/>
    <property type="match status" value="1"/>
</dbReference>
<dbReference type="SUPFAM" id="SSF49879">
    <property type="entry name" value="SMAD/FHA domain"/>
    <property type="match status" value="1"/>
</dbReference>
<dbReference type="PROSITE" id="PS50006">
    <property type="entry name" value="FHA_DOMAIN"/>
    <property type="match status" value="1"/>
</dbReference>
<dbReference type="PROSITE" id="PS00518">
    <property type="entry name" value="ZF_RING_1"/>
    <property type="match status" value="1"/>
</dbReference>
<dbReference type="PROSITE" id="PS50089">
    <property type="entry name" value="ZF_RING_2"/>
    <property type="match status" value="1"/>
</dbReference>
<name>RNF8A_XENLA</name>
<accession>Q7ZX20</accession>
<comment type="function">
    <text evidence="1">E3 ubiquitin-protein ligase that plays a key role in DNA damage signaling via 2 distinct roles: by mediating the 'Lys-63'-linked ubiquitination of histones H2A and H2AX and promoting the recruitment of DNA repair proteins at double-strand breaks (DSBs) sites, and by catalyzing 'Lys-48'-linked ubiquitination to remove target proteins from DNA damage sites. Following DNA DSBs, it is recruited to the sites of damage by ATM-phosphorylated mdc1 and catalyzes the 'Lys-63'-linked ubiquitination of histones H2A and H2AX, thereby promoting the formation of tp53bp1 and brca1 ionizing radiation-induced foci (IRIF). H2A ubiquitination also mediates the ATM-dependent transcriptional silencing at regions flanking DSBs in cis, a mechanism to avoid collision between transcription and repair intermediates. Also catalyzes the formation of 'Lys-48'-linked polyubiquitin chains, leading to degradation of substrate proteins. In addition to its function in damage signaling, also plays a role in higher-order chromatin structure by mediating extensive chromatin decondensation.</text>
</comment>
<comment type="catalytic activity">
    <reaction evidence="1">
        <text>S-ubiquitinyl-[E2 ubiquitin-conjugating enzyme]-L-cysteine + [acceptor protein]-L-lysine = [E2 ubiquitin-conjugating enzyme]-L-cysteine + N(6)-ubiquitinyl-[acceptor protein]-L-lysine.</text>
        <dbReference type="EC" id="2.3.2.27"/>
    </reaction>
</comment>
<comment type="pathway">
    <text evidence="1">Protein modification; protein ubiquitination.</text>
</comment>
<comment type="subunit">
    <text evidence="1">Homodimer. Forms a E2-E3 ubiquitin ligase complex composed of the rnf8 homodimer and a E2 heterodimer of ube2n and ube2v2.</text>
</comment>
<comment type="subcellular location">
    <subcellularLocation>
        <location evidence="1">Nucleus</location>
    </subcellularLocation>
    <text evidence="1">Following DNA double-strand breaks, recruited to the sites of damage.</text>
</comment>
<comment type="domain">
    <text evidence="1">The FHA domain specifically recognizes and binds ATM-phosphorylated MDC1.</text>
</comment>
<comment type="similarity">
    <text evidence="1">Belongs to the RNF8 family.</text>
</comment>
<keyword id="KW-0156">Chromatin regulator</keyword>
<keyword id="KW-0227">DNA damage</keyword>
<keyword id="KW-0234">DNA repair</keyword>
<keyword id="KW-0479">Metal-binding</keyword>
<keyword id="KW-0539">Nucleus</keyword>
<keyword id="KW-1185">Reference proteome</keyword>
<keyword id="KW-0808">Transferase</keyword>
<keyword id="KW-0833">Ubl conjugation pathway</keyword>
<keyword id="KW-0862">Zinc</keyword>
<keyword id="KW-0863">Zinc-finger</keyword>
<feature type="chain" id="PRO_0000367279" description="E3 ubiquitin-protein ligase rnf8-A">
    <location>
        <begin position="1"/>
        <end position="540"/>
    </location>
</feature>
<feature type="domain" description="FHA" evidence="1">
    <location>
        <begin position="30"/>
        <end position="84"/>
    </location>
</feature>
<feature type="zinc finger region" description="RING-type" evidence="1">
    <location>
        <begin position="382"/>
        <end position="420"/>
    </location>
</feature>
<feature type="region of interest" description="Disordered" evidence="2">
    <location>
        <begin position="128"/>
        <end position="205"/>
    </location>
</feature>
<feature type="region of interest" description="Disordered" evidence="2">
    <location>
        <begin position="517"/>
        <end position="540"/>
    </location>
</feature>
<feature type="compositionally biased region" description="Polar residues" evidence="2">
    <location>
        <begin position="152"/>
        <end position="162"/>
    </location>
</feature>
<feature type="compositionally biased region" description="Polar residues" evidence="2">
    <location>
        <begin position="179"/>
        <end position="200"/>
    </location>
</feature>
<feature type="compositionally biased region" description="Acidic residues" evidence="2">
    <location>
        <begin position="519"/>
        <end position="540"/>
    </location>
</feature>
<evidence type="ECO:0000255" key="1">
    <source>
        <dbReference type="HAMAP-Rule" id="MF_03067"/>
    </source>
</evidence>
<evidence type="ECO:0000256" key="2">
    <source>
        <dbReference type="SAM" id="MobiDB-lite"/>
    </source>
</evidence>
<organism>
    <name type="scientific">Xenopus laevis</name>
    <name type="common">African clawed frog</name>
    <dbReference type="NCBI Taxonomy" id="8355"/>
    <lineage>
        <taxon>Eukaryota</taxon>
        <taxon>Metazoa</taxon>
        <taxon>Chordata</taxon>
        <taxon>Craniata</taxon>
        <taxon>Vertebrata</taxon>
        <taxon>Euteleostomi</taxon>
        <taxon>Amphibia</taxon>
        <taxon>Batrachia</taxon>
        <taxon>Anura</taxon>
        <taxon>Pipoidea</taxon>
        <taxon>Pipidae</taxon>
        <taxon>Xenopodinae</taxon>
        <taxon>Xenopus</taxon>
        <taxon>Xenopus</taxon>
    </lineage>
</organism>
<protein>
    <recommendedName>
        <fullName evidence="1">E3 ubiquitin-protein ligase rnf8-A</fullName>
        <ecNumber evidence="1">2.3.2.27</ecNumber>
    </recommendedName>
    <alternativeName>
        <fullName evidence="1">RING finger protein 8-A</fullName>
    </alternativeName>
    <alternativeName>
        <fullName>RING-type E3 ubiquitin transferase rnf8-A</fullName>
    </alternativeName>
</protein>
<proteinExistence type="evidence at transcript level"/>
<gene>
    <name evidence="1" type="primary">rnf8-A</name>
</gene>
<sequence>MTDEGPGMCWCLRRCGRNTEDLLLPDGEEVTLGRGLGVTYQLKPTLCPLMISRTHCLFKQNTGGEWTVTDNKSLNGVWRNKERLEPHKAYTLSEGALIQLGVPPPNMESAEFEYMLVREHLEKLSGSLIRPLPDKTKATRTKRKFTSEDTDASGNEGPSNFSIPKFYRVSREDEDSAKSSHTTDLYKQPTVEPTASGTESRLNDSVEAEVVAPTQQQCRSTLQLSRVRQTMEEIRRLNVQMQEKQMEMQEKLNSPLENQVGANSVLAVQKELRALHNHLSNEQEQHMQSVKELKEIFEEEQQSMGSRKQVEEEHLKEQLAQALQEHTQLMQELNRSKNDFEQIIEAKNKELQETKEEKEKVFAQKEEVLNHMNDVLDNELQCIICSEHFIEAVTLNCAHSFCSYCIKSWKKRKEECPICRQEIVTETRSLVLDNCIDSMVDKLSPEMKNRRAALILERKEMVQAEESNPVLVVSDSSSFLSDTFYISSSSSDSDELGNDFWMRSEEEEYEETLFGCGTDELDSSDFESDDDEEEDSFLII</sequence>
<reference key="1">
    <citation type="submission" date="2003-01" db="EMBL/GenBank/DDBJ databases">
        <authorList>
            <consortium name="NIH - Xenopus Gene Collection (XGC) project"/>
        </authorList>
    </citation>
    <scope>NUCLEOTIDE SEQUENCE [LARGE SCALE MRNA]</scope>
    <source>
        <tissue>Embryo</tissue>
    </source>
</reference>